<name>S25A3_HUMAN</name>
<protein>
    <recommendedName>
        <fullName evidence="10">Solute carrier family 25 member 3</fullName>
    </recommendedName>
    <alternativeName>
        <fullName evidence="10">Phosphate carrier protein, mitochondrial</fullName>
    </alternativeName>
    <alternativeName>
        <fullName>Phosphate transport protein</fullName>
        <shortName>PTP</shortName>
    </alternativeName>
</protein>
<organism>
    <name type="scientific">Homo sapiens</name>
    <name type="common">Human</name>
    <dbReference type="NCBI Taxonomy" id="9606"/>
    <lineage>
        <taxon>Eukaryota</taxon>
        <taxon>Metazoa</taxon>
        <taxon>Chordata</taxon>
        <taxon>Craniata</taxon>
        <taxon>Vertebrata</taxon>
        <taxon>Euteleostomi</taxon>
        <taxon>Mammalia</taxon>
        <taxon>Eutheria</taxon>
        <taxon>Euarchontoglires</taxon>
        <taxon>Primates</taxon>
        <taxon>Haplorrhini</taxon>
        <taxon>Catarrhini</taxon>
        <taxon>Hominidae</taxon>
        <taxon>Homo</taxon>
    </lineage>
</organism>
<proteinExistence type="evidence at protein level"/>
<reference key="1">
    <citation type="journal article" date="1994" name="J. Biol. Chem.">
        <title>The sequences of human and bovine genes of the phosphate carrier from mitochondria contain evidence of alternatively spliced forms.</title>
        <authorList>
            <person name="Dolce V."/>
            <person name="Iacobazzi V."/>
            <person name="Palmieri F."/>
            <person name="Walker J.E."/>
        </authorList>
    </citation>
    <scope>NUCLEOTIDE SEQUENCE [GENOMIC DNA] (ISOFORMS A AND B)</scope>
    <source>
        <tissue>Placenta</tissue>
    </source>
</reference>
<reference key="2">
    <citation type="journal article" date="1991" name="DNA Seq.">
        <title>Nucleotide sequence of a human heart cDNA encoding the mitochondrial phosphate carrier.</title>
        <authorList>
            <person name="Dolce V."/>
            <person name="Fiermonte G."/>
            <person name="Messina A."/>
            <person name="Palmieri F."/>
        </authorList>
    </citation>
    <scope>NUCLEOTIDE SEQUENCE [MRNA] (ISOFORM B)</scope>
    <source>
        <tissue>Heart</tissue>
    </source>
</reference>
<reference key="3">
    <citation type="submission" date="2001-07" db="EMBL/GenBank/DDBJ databases">
        <title>Identification of immuno-peptidmics that are recognized by tumor-reactive CTL generated from TIL of colon cancer patients.</title>
        <authorList>
            <person name="Shichijo S."/>
            <person name="Itoh K."/>
        </authorList>
    </citation>
    <scope>NUCLEOTIDE SEQUENCE [LARGE SCALE MRNA] (ISOFORM B)</scope>
    <source>
        <tissue>Colon adenocarcinoma</tissue>
    </source>
</reference>
<reference key="4">
    <citation type="journal article" date="2004" name="Nat. Genet.">
        <title>Complete sequencing and characterization of 21,243 full-length human cDNAs.</title>
        <authorList>
            <person name="Ota T."/>
            <person name="Suzuki Y."/>
            <person name="Nishikawa T."/>
            <person name="Otsuki T."/>
            <person name="Sugiyama T."/>
            <person name="Irie R."/>
            <person name="Wakamatsu A."/>
            <person name="Hayashi K."/>
            <person name="Sato H."/>
            <person name="Nagai K."/>
            <person name="Kimura K."/>
            <person name="Makita H."/>
            <person name="Sekine M."/>
            <person name="Obayashi M."/>
            <person name="Nishi T."/>
            <person name="Shibahara T."/>
            <person name="Tanaka T."/>
            <person name="Ishii S."/>
            <person name="Yamamoto J."/>
            <person name="Saito K."/>
            <person name="Kawai Y."/>
            <person name="Isono Y."/>
            <person name="Nakamura Y."/>
            <person name="Nagahari K."/>
            <person name="Murakami K."/>
            <person name="Yasuda T."/>
            <person name="Iwayanagi T."/>
            <person name="Wagatsuma M."/>
            <person name="Shiratori A."/>
            <person name="Sudo H."/>
            <person name="Hosoiri T."/>
            <person name="Kaku Y."/>
            <person name="Kodaira H."/>
            <person name="Kondo H."/>
            <person name="Sugawara M."/>
            <person name="Takahashi M."/>
            <person name="Kanda K."/>
            <person name="Yokoi T."/>
            <person name="Furuya T."/>
            <person name="Kikkawa E."/>
            <person name="Omura Y."/>
            <person name="Abe K."/>
            <person name="Kamihara K."/>
            <person name="Katsuta N."/>
            <person name="Sato K."/>
            <person name="Tanikawa M."/>
            <person name="Yamazaki M."/>
            <person name="Ninomiya K."/>
            <person name="Ishibashi T."/>
            <person name="Yamashita H."/>
            <person name="Murakawa K."/>
            <person name="Fujimori K."/>
            <person name="Tanai H."/>
            <person name="Kimata M."/>
            <person name="Watanabe M."/>
            <person name="Hiraoka S."/>
            <person name="Chiba Y."/>
            <person name="Ishida S."/>
            <person name="Ono Y."/>
            <person name="Takiguchi S."/>
            <person name="Watanabe S."/>
            <person name="Yosida M."/>
            <person name="Hotuta T."/>
            <person name="Kusano J."/>
            <person name="Kanehori K."/>
            <person name="Takahashi-Fujii A."/>
            <person name="Hara H."/>
            <person name="Tanase T.-O."/>
            <person name="Nomura Y."/>
            <person name="Togiya S."/>
            <person name="Komai F."/>
            <person name="Hara R."/>
            <person name="Takeuchi K."/>
            <person name="Arita M."/>
            <person name="Imose N."/>
            <person name="Musashino K."/>
            <person name="Yuuki H."/>
            <person name="Oshima A."/>
            <person name="Sasaki N."/>
            <person name="Aotsuka S."/>
            <person name="Yoshikawa Y."/>
            <person name="Matsunawa H."/>
            <person name="Ichihara T."/>
            <person name="Shiohata N."/>
            <person name="Sano S."/>
            <person name="Moriya S."/>
            <person name="Momiyama H."/>
            <person name="Satoh N."/>
            <person name="Takami S."/>
            <person name="Terashima Y."/>
            <person name="Suzuki O."/>
            <person name="Nakagawa S."/>
            <person name="Senoh A."/>
            <person name="Mizoguchi H."/>
            <person name="Goto Y."/>
            <person name="Shimizu F."/>
            <person name="Wakebe H."/>
            <person name="Hishigaki H."/>
            <person name="Watanabe T."/>
            <person name="Sugiyama A."/>
            <person name="Takemoto M."/>
            <person name="Kawakami B."/>
            <person name="Yamazaki M."/>
            <person name="Watanabe K."/>
            <person name="Kumagai A."/>
            <person name="Itakura S."/>
            <person name="Fukuzumi Y."/>
            <person name="Fujimori Y."/>
            <person name="Komiyama M."/>
            <person name="Tashiro H."/>
            <person name="Tanigami A."/>
            <person name="Fujiwara T."/>
            <person name="Ono T."/>
            <person name="Yamada K."/>
            <person name="Fujii Y."/>
            <person name="Ozaki K."/>
            <person name="Hirao M."/>
            <person name="Ohmori Y."/>
            <person name="Kawabata A."/>
            <person name="Hikiji T."/>
            <person name="Kobatake N."/>
            <person name="Inagaki H."/>
            <person name="Ikema Y."/>
            <person name="Okamoto S."/>
            <person name="Okitani R."/>
            <person name="Kawakami T."/>
            <person name="Noguchi S."/>
            <person name="Itoh T."/>
            <person name="Shigeta K."/>
            <person name="Senba T."/>
            <person name="Matsumura K."/>
            <person name="Nakajima Y."/>
            <person name="Mizuno T."/>
            <person name="Morinaga M."/>
            <person name="Sasaki M."/>
            <person name="Togashi T."/>
            <person name="Oyama M."/>
            <person name="Hata H."/>
            <person name="Watanabe M."/>
            <person name="Komatsu T."/>
            <person name="Mizushima-Sugano J."/>
            <person name="Satoh T."/>
            <person name="Shirai Y."/>
            <person name="Takahashi Y."/>
            <person name="Nakagawa K."/>
            <person name="Okumura K."/>
            <person name="Nagase T."/>
            <person name="Nomura N."/>
            <person name="Kikuchi H."/>
            <person name="Masuho Y."/>
            <person name="Yamashita R."/>
            <person name="Nakai K."/>
            <person name="Yada T."/>
            <person name="Nakamura Y."/>
            <person name="Ohara O."/>
            <person name="Isogai T."/>
            <person name="Sugano S."/>
        </authorList>
    </citation>
    <scope>NUCLEOTIDE SEQUENCE [LARGE SCALE MRNA] (ISOFORM A)</scope>
    <source>
        <tissue>Skeletal muscle</tissue>
    </source>
</reference>
<reference key="5">
    <citation type="submission" date="2005-07" db="EMBL/GenBank/DDBJ databases">
        <authorList>
            <person name="Mural R.J."/>
            <person name="Istrail S."/>
            <person name="Sutton G.G."/>
            <person name="Florea L."/>
            <person name="Halpern A.L."/>
            <person name="Mobarry C.M."/>
            <person name="Lippert R."/>
            <person name="Walenz B."/>
            <person name="Shatkay H."/>
            <person name="Dew I."/>
            <person name="Miller J.R."/>
            <person name="Flanigan M.J."/>
            <person name="Edwards N.J."/>
            <person name="Bolanos R."/>
            <person name="Fasulo D."/>
            <person name="Halldorsson B.V."/>
            <person name="Hannenhalli S."/>
            <person name="Turner R."/>
            <person name="Yooseph S."/>
            <person name="Lu F."/>
            <person name="Nusskern D.R."/>
            <person name="Shue B.C."/>
            <person name="Zheng X.H."/>
            <person name="Zhong F."/>
            <person name="Delcher A.L."/>
            <person name="Huson D.H."/>
            <person name="Kravitz S.A."/>
            <person name="Mouchard L."/>
            <person name="Reinert K."/>
            <person name="Remington K.A."/>
            <person name="Clark A.G."/>
            <person name="Waterman M.S."/>
            <person name="Eichler E.E."/>
            <person name="Adams M.D."/>
            <person name="Hunkapiller M.W."/>
            <person name="Myers E.W."/>
            <person name="Venter J.C."/>
        </authorList>
    </citation>
    <scope>NUCLEOTIDE SEQUENCE [LARGE SCALE GENOMIC DNA]</scope>
</reference>
<reference key="6">
    <citation type="journal article" date="2004" name="Genome Res.">
        <title>The status, quality, and expansion of the NIH full-length cDNA project: the Mammalian Gene Collection (MGC).</title>
        <authorList>
            <consortium name="The MGC Project Team"/>
        </authorList>
    </citation>
    <scope>NUCLEOTIDE SEQUENCE [LARGE SCALE MRNA] (ISOFORM B)</scope>
    <source>
        <tissue>Brain</tissue>
        <tissue>Cervix</tissue>
        <tissue>Lung</tissue>
        <tissue>Ovary</tissue>
        <tissue>Placenta</tissue>
        <tissue>Prostate</tissue>
    </source>
</reference>
<reference key="7">
    <citation type="journal article" date="2003" name="Nature">
        <title>Proteomic characterization of the human centrosome by protein correlation profiling.</title>
        <authorList>
            <person name="Andersen J.S."/>
            <person name="Wilkinson C.J."/>
            <person name="Mayor T."/>
            <person name="Mortensen P."/>
            <person name="Nigg E.A."/>
            <person name="Mann M."/>
        </authorList>
    </citation>
    <scope>IDENTIFICATION BY MASS SPECTROMETRY</scope>
    <source>
        <tissue>Lymphoblast</tissue>
    </source>
</reference>
<reference key="8">
    <citation type="journal article" date="2009" name="Mol. Cell. Proteomics">
        <title>Large-scale proteomics analysis of the human kinome.</title>
        <authorList>
            <person name="Oppermann F.S."/>
            <person name="Gnad F."/>
            <person name="Olsen J.V."/>
            <person name="Hornberger R."/>
            <person name="Greff Z."/>
            <person name="Keri G."/>
            <person name="Mann M."/>
            <person name="Daub H."/>
        </authorList>
    </citation>
    <scope>PHOSPHORYLATION [LARGE SCALE ANALYSIS] AT TYR-196</scope>
    <scope>IDENTIFICATION BY MASS SPECTROMETRY [LARGE SCALE ANALYSIS]</scope>
</reference>
<reference key="9">
    <citation type="journal article" date="2009" name="Science">
        <title>Lysine acetylation targets protein complexes and co-regulates major cellular functions.</title>
        <authorList>
            <person name="Choudhary C."/>
            <person name="Kumar C."/>
            <person name="Gnad F."/>
            <person name="Nielsen M.L."/>
            <person name="Rehman M."/>
            <person name="Walther T.C."/>
            <person name="Olsen J.V."/>
            <person name="Mann M."/>
        </authorList>
    </citation>
    <scope>ACETYLATION [LARGE SCALE ANALYSIS] AT LYS-99</scope>
    <scope>IDENTIFICATION BY MASS SPECTROMETRY [LARGE SCALE ANALYSIS]</scope>
</reference>
<reference key="10">
    <citation type="journal article" date="2011" name="BMC Syst. Biol.">
        <title>Initial characterization of the human central proteome.</title>
        <authorList>
            <person name="Burkard T.R."/>
            <person name="Planyavsky M."/>
            <person name="Kaupe I."/>
            <person name="Breitwieser F.P."/>
            <person name="Buerckstuemmer T."/>
            <person name="Bennett K.L."/>
            <person name="Superti-Furga G."/>
            <person name="Colinge J."/>
        </authorList>
    </citation>
    <scope>IDENTIFICATION BY MASS SPECTROMETRY [LARGE SCALE ANALYSIS]</scope>
</reference>
<reference key="11">
    <citation type="journal article" date="2014" name="J. Proteomics">
        <title>An enzyme assisted RP-RPLC approach for in-depth analysis of human liver phosphoproteome.</title>
        <authorList>
            <person name="Bian Y."/>
            <person name="Song C."/>
            <person name="Cheng K."/>
            <person name="Dong M."/>
            <person name="Wang F."/>
            <person name="Huang J."/>
            <person name="Sun D."/>
            <person name="Wang L."/>
            <person name="Ye M."/>
            <person name="Zou H."/>
        </authorList>
    </citation>
    <scope>IDENTIFICATION BY MASS SPECTROMETRY [LARGE SCALE ANALYSIS]</scope>
    <source>
        <tissue>Liver</tissue>
    </source>
</reference>
<reference key="12">
    <citation type="journal article" date="2014" name="Mol. Cell. Proteomics">
        <title>Immunoaffinity enrichment and mass spectrometry analysis of protein methylation.</title>
        <authorList>
            <person name="Guo A."/>
            <person name="Gu H."/>
            <person name="Zhou J."/>
            <person name="Mulhern D."/>
            <person name="Wang Y."/>
            <person name="Lee K.A."/>
            <person name="Yang V."/>
            <person name="Aguiar M."/>
            <person name="Kornhauser J."/>
            <person name="Jia X."/>
            <person name="Ren J."/>
            <person name="Beausoleil S.A."/>
            <person name="Silva J.C."/>
            <person name="Vemulapalli V."/>
            <person name="Bedford M.T."/>
            <person name="Comb M.J."/>
        </authorList>
    </citation>
    <scope>METHYLATION [LARGE SCALE ANALYSIS] AT LYS-112</scope>
    <scope>IDENTIFICATION BY MASS SPECTROMETRY [LARGE SCALE ANALYSIS]</scope>
    <source>
        <tissue>Colon carcinoma</tissue>
    </source>
</reference>
<reference key="13">
    <citation type="journal article" date="2015" name="Proteomics">
        <title>N-terminome analysis of the human mitochondrial proteome.</title>
        <authorList>
            <person name="Vaca Jacome A.S."/>
            <person name="Rabilloud T."/>
            <person name="Schaeffer-Reiss C."/>
            <person name="Rompais M."/>
            <person name="Ayoub D."/>
            <person name="Lane L."/>
            <person name="Bairoch A."/>
            <person name="Van Dorsselaer A."/>
            <person name="Carapito C."/>
        </authorList>
    </citation>
    <scope>IDENTIFICATION BY MASS SPECTROMETRY [LARGE SCALE ANALYSIS]</scope>
</reference>
<reference key="14">
    <citation type="journal article" date="2018" name="J. Biol. Chem.">
        <title>The mammalian phosphate carrier SLC25A3 is a mitochondrial copper transporter required for cytochrome c oxidase biogenesis.</title>
        <authorList>
            <person name="Boulet A."/>
            <person name="Vest K.E."/>
            <person name="Maynard M.K."/>
            <person name="Gammon M.G."/>
            <person name="Russell A.C."/>
            <person name="Mathews A.T."/>
            <person name="Cole S.E."/>
            <person name="Zhu X."/>
            <person name="Phillips C.B."/>
            <person name="Kwong J.Q."/>
            <person name="Dodani S.C."/>
            <person name="Leary S.C."/>
            <person name="Cobine P.A."/>
        </authorList>
    </citation>
    <scope>FUNCTION</scope>
    <scope>BIOPHYSICOCHEMICAL PROPERTIES (ISOFORMS A AND B)</scope>
</reference>
<reference key="15">
    <citation type="journal article" date="2007" name="Am. J. Hum. Genet.">
        <title>Mitochondrial phosphate-carrier deficiency: a novel disorder of oxidative phosphorylation.</title>
        <authorList>
            <person name="Mayr J.A."/>
            <person name="Merkel O."/>
            <person name="Kohlwein S.D."/>
            <person name="Gebhardt B.R."/>
            <person name="Boehles H."/>
            <person name="Foetschl U."/>
            <person name="Koch J."/>
            <person name="Jaksch M."/>
            <person name="Lochmueller H."/>
            <person name="Horvath R."/>
            <person name="Freisinger P."/>
            <person name="Sperl W."/>
        </authorList>
    </citation>
    <scope>VARIANT MPCD GLU-72</scope>
    <scope>FUNCTION</scope>
</reference>
<gene>
    <name evidence="10 13" type="primary">SLC25A3</name>
    <name type="synonym">PHC</name>
    <name type="ORF">OK/SW-cl.48</name>
</gene>
<feature type="transit peptide" description="Mitochondrion" evidence="1">
    <location>
        <begin position="1"/>
        <end position="49"/>
    </location>
</feature>
<feature type="chain" id="PRO_0000019256" description="Solute carrier family 25 member 3">
    <location>
        <begin position="50"/>
        <end position="362"/>
    </location>
</feature>
<feature type="topological domain" description="Mitochondrial intermembrane" evidence="5">
    <location>
        <begin position="50"/>
        <end position="63"/>
    </location>
</feature>
<feature type="transmembrane region" description="Helical; Name=1" evidence="5">
    <location>
        <begin position="64"/>
        <end position="86"/>
    </location>
</feature>
<feature type="topological domain" description="Mitochondrial matrix" evidence="5">
    <location>
        <begin position="87"/>
        <end position="121"/>
    </location>
</feature>
<feature type="transmembrane region" description="Helical; Name=2" evidence="5">
    <location>
        <begin position="122"/>
        <end position="141"/>
    </location>
</feature>
<feature type="topological domain" description="Mitochondrial intermembrane" evidence="5">
    <location>
        <begin position="142"/>
        <end position="161"/>
    </location>
</feature>
<feature type="transmembrane region" description="Helical; Name=3" evidence="5">
    <location>
        <begin position="162"/>
        <end position="183"/>
    </location>
</feature>
<feature type="topological domain" description="Mitochondrial matrix" evidence="5">
    <location>
        <begin position="184"/>
        <end position="218"/>
    </location>
</feature>
<feature type="transmembrane region" description="Helical; Name=4" evidence="5">
    <location>
        <begin position="219"/>
        <end position="238"/>
    </location>
</feature>
<feature type="topological domain" description="Mitochondrial intermembrane" evidence="5">
    <location>
        <begin position="239"/>
        <end position="261"/>
    </location>
</feature>
<feature type="transmembrane region" description="Helical; Name=5" evidence="5">
    <location>
        <begin position="262"/>
        <end position="284"/>
    </location>
</feature>
<feature type="topological domain" description="Mitochondrial matrix" evidence="5">
    <location>
        <begin position="285"/>
        <end position="314"/>
    </location>
</feature>
<feature type="transmembrane region" description="Helical; Name=6" evidence="5">
    <location>
        <begin position="315"/>
        <end position="333"/>
    </location>
</feature>
<feature type="topological domain" description="Mitochondrial intermembrane" evidence="5">
    <location>
        <begin position="334"/>
        <end position="362"/>
    </location>
</feature>
<feature type="repeat" description="Solcar 1">
    <location>
        <begin position="63"/>
        <end position="147"/>
    </location>
</feature>
<feature type="repeat" description="Solcar 2">
    <location>
        <begin position="160"/>
        <end position="244"/>
    </location>
</feature>
<feature type="repeat" description="Solcar 3">
    <location>
        <begin position="261"/>
        <end position="339"/>
    </location>
</feature>
<feature type="modified residue" description="N6-acetyllysine" evidence="15">
    <location>
        <position position="99"/>
    </location>
</feature>
<feature type="modified residue" description="N6-methyllysine" evidence="16">
    <location>
        <position position="112"/>
    </location>
</feature>
<feature type="modified residue" description="Phosphotyrosine" evidence="14">
    <location>
        <position position="196"/>
    </location>
</feature>
<feature type="modified residue" description="N6-acetyllysine" evidence="4">
    <location>
        <position position="209"/>
    </location>
</feature>
<feature type="splice variant" id="VSP_003269" description="In isoform B." evidence="8 9 11">
    <original>QYSCDYGSGRFFILCGLGGIISCGTTHTAL</original>
    <variation>YSCEFGSAKYYALCGFGGVLSCGLTHTAV</variation>
    <location>
        <begin position="54"/>
        <end position="83"/>
    </location>
</feature>
<feature type="sequence variant" id="VAR_032850" description="In MPCD; dbSNP:rs104894375." evidence="6">
    <original>G</original>
    <variation>E</variation>
    <location>
        <position position="72"/>
    </location>
</feature>
<accession>Q00325</accession>
<accession>B3KS34</accession>
<accession>Q7Z7N7</accession>
<accession>Q96A03</accession>
<keyword id="KW-0007">Acetylation</keyword>
<keyword id="KW-0025">Alternative splicing</keyword>
<keyword id="KW-0225">Disease variant</keyword>
<keyword id="KW-0472">Membrane</keyword>
<keyword id="KW-0488">Methylation</keyword>
<keyword id="KW-0496">Mitochondrion</keyword>
<keyword id="KW-0999">Mitochondrion inner membrane</keyword>
<keyword id="KW-0597">Phosphoprotein</keyword>
<keyword id="KW-1274">Primary mitochondrial disease</keyword>
<keyword id="KW-1267">Proteomics identification</keyword>
<keyword id="KW-1185">Reference proteome</keyword>
<keyword id="KW-0677">Repeat</keyword>
<keyword id="KW-0769">Symport</keyword>
<keyword id="KW-0809">Transit peptide</keyword>
<keyword id="KW-0812">Transmembrane</keyword>
<keyword id="KW-1133">Transmembrane helix</keyword>
<keyword id="KW-0813">Transport</keyword>
<evidence type="ECO:0000250" key="1"/>
<evidence type="ECO:0000250" key="2">
    <source>
        <dbReference type="UniProtKB" id="P12234"/>
    </source>
</evidence>
<evidence type="ECO:0000250" key="3">
    <source>
        <dbReference type="UniProtKB" id="P16036"/>
    </source>
</evidence>
<evidence type="ECO:0000250" key="4">
    <source>
        <dbReference type="UniProtKB" id="Q8VEM8"/>
    </source>
</evidence>
<evidence type="ECO:0000255" key="5"/>
<evidence type="ECO:0000269" key="6">
    <source>
    </source>
</evidence>
<evidence type="ECO:0000269" key="7">
    <source>
    </source>
</evidence>
<evidence type="ECO:0000303" key="8">
    <source>
    </source>
</evidence>
<evidence type="ECO:0000303" key="9">
    <source>
    </source>
</evidence>
<evidence type="ECO:0000303" key="10">
    <source>
    </source>
</evidence>
<evidence type="ECO:0000303" key="11">
    <source ref="3"/>
</evidence>
<evidence type="ECO:0000305" key="12"/>
<evidence type="ECO:0000312" key="13">
    <source>
        <dbReference type="HGNC" id="HGNC:10989"/>
    </source>
</evidence>
<evidence type="ECO:0007744" key="14">
    <source>
    </source>
</evidence>
<evidence type="ECO:0007744" key="15">
    <source>
    </source>
</evidence>
<evidence type="ECO:0007744" key="16">
    <source>
    </source>
</evidence>
<sequence length="362" mass="40095">MFSSVAHLARANPFNTPHLQLVHDGLGDLRSSSPGPTGQPRRPRNLAAAAVEEQYSCDYGSGRFFILCGLGGIISCGTTHTALVPLDLVKCRMQVDPQKYKGIFNGFSVTLKEDGVRGLAKGWAPTFLGYSMQGLCKFGFYEVFKVLYSNMLGEENTYLWRTSLYLAASASAEFFADIALAPMEAAKVRIQTQPGYANTLRDAAPKMYKEEGLKAFYKGVAPLWMRQIPYTMMKFACFERTVEALYKFVVPKPRSECSKPEQLVVTFVAGYIAGVFCAIVSHPADSVVSVLNKEKGSSASLVLKRLGFKGVWKGLFARIIMIGTLTALQWFIYDSVKVYFRLPRPPPPEMPESLKKKLGLTQ</sequence>
<dbReference type="EMBL" id="X77337">
    <property type="protein sequence ID" value="CAB56611.1"/>
    <property type="molecule type" value="Genomic_DNA"/>
</dbReference>
<dbReference type="EMBL" id="X77337">
    <property type="protein sequence ID" value="CAB56612.1"/>
    <property type="molecule type" value="Genomic_DNA"/>
</dbReference>
<dbReference type="EMBL" id="X60036">
    <property type="protein sequence ID" value="CAA42641.1"/>
    <property type="molecule type" value="mRNA"/>
</dbReference>
<dbReference type="EMBL" id="AB064666">
    <property type="protein sequence ID" value="BAB93517.1"/>
    <property type="molecule type" value="mRNA"/>
</dbReference>
<dbReference type="EMBL" id="AK092689">
    <property type="protein sequence ID" value="BAG52596.1"/>
    <property type="molecule type" value="mRNA"/>
</dbReference>
<dbReference type="EMBL" id="CH471054">
    <property type="protein sequence ID" value="EAW97595.1"/>
    <property type="molecule type" value="Genomic_DNA"/>
</dbReference>
<dbReference type="EMBL" id="CH471054">
    <property type="protein sequence ID" value="EAW97597.1"/>
    <property type="molecule type" value="Genomic_DNA"/>
</dbReference>
<dbReference type="EMBL" id="BC000998">
    <property type="protein sequence ID" value="AAH00998.1"/>
    <property type="molecule type" value="mRNA"/>
</dbReference>
<dbReference type="EMBL" id="BC001328">
    <property type="protein sequence ID" value="AAH01328.1"/>
    <property type="molecule type" value="mRNA"/>
</dbReference>
<dbReference type="EMBL" id="BC003504">
    <property type="protein sequence ID" value="AAH03504.1"/>
    <property type="molecule type" value="mRNA"/>
</dbReference>
<dbReference type="EMBL" id="BC004345">
    <property type="protein sequence ID" value="AAH04345.1"/>
    <property type="molecule type" value="mRNA"/>
</dbReference>
<dbReference type="EMBL" id="BC006455">
    <property type="protein sequence ID" value="AAH06455.1"/>
    <property type="molecule type" value="mRNA"/>
</dbReference>
<dbReference type="EMBL" id="BC011574">
    <property type="protein sequence ID" value="AAH11574.1"/>
    <property type="molecule type" value="mRNA"/>
</dbReference>
<dbReference type="EMBL" id="BC011641">
    <property type="protein sequence ID" value="AAH11641.1"/>
    <property type="molecule type" value="mRNA"/>
</dbReference>
<dbReference type="EMBL" id="BC014019">
    <property type="protein sequence ID" value="AAH14019.1"/>
    <property type="molecule type" value="mRNA"/>
</dbReference>
<dbReference type="EMBL" id="BC015379">
    <property type="protein sequence ID" value="AAH15379.2"/>
    <property type="molecule type" value="mRNA"/>
</dbReference>
<dbReference type="EMBL" id="BC051367">
    <property type="protein sequence ID" value="AAH51367.2"/>
    <property type="molecule type" value="mRNA"/>
</dbReference>
<dbReference type="CCDS" id="CCDS9065.1">
    <molecule id="Q00325-2"/>
</dbReference>
<dbReference type="CCDS" id="CCDS9066.1">
    <molecule id="Q00325-1"/>
</dbReference>
<dbReference type="PIR" id="A53737">
    <property type="entry name" value="A53737"/>
</dbReference>
<dbReference type="PIR" id="B53737">
    <property type="entry name" value="B53737"/>
</dbReference>
<dbReference type="RefSeq" id="NP_002626.1">
    <molecule id="Q00325-2"/>
    <property type="nucleotide sequence ID" value="NM_002635.4"/>
</dbReference>
<dbReference type="RefSeq" id="NP_005879.1">
    <molecule id="Q00325-1"/>
    <property type="nucleotide sequence ID" value="NM_005888.4"/>
</dbReference>
<dbReference type="RefSeq" id="NP_998776.1">
    <molecule id="Q00325-2"/>
    <property type="nucleotide sequence ID" value="NM_213611.3"/>
</dbReference>
<dbReference type="SMR" id="Q00325"/>
<dbReference type="BioGRID" id="111269">
    <property type="interactions" value="407"/>
</dbReference>
<dbReference type="CORUM" id="Q00325"/>
<dbReference type="FunCoup" id="Q00325">
    <property type="interactions" value="1664"/>
</dbReference>
<dbReference type="IntAct" id="Q00325">
    <property type="interactions" value="175"/>
</dbReference>
<dbReference type="MINT" id="Q00325"/>
<dbReference type="STRING" id="9606.ENSP00000228318"/>
<dbReference type="ChEMBL" id="CHEMBL4295795"/>
<dbReference type="TCDB" id="2.A.29.4.2">
    <property type="family name" value="the mitochondrial carrier (mc) family"/>
</dbReference>
<dbReference type="GlyGen" id="Q00325">
    <property type="glycosylation" value="1 site, 1 O-linked glycan (1 site)"/>
</dbReference>
<dbReference type="iPTMnet" id="Q00325"/>
<dbReference type="MetOSite" id="Q00325"/>
<dbReference type="PhosphoSitePlus" id="Q00325"/>
<dbReference type="SwissPalm" id="Q00325"/>
<dbReference type="BioMuta" id="SLC25A3"/>
<dbReference type="DMDM" id="730052"/>
<dbReference type="jPOST" id="Q00325"/>
<dbReference type="MassIVE" id="Q00325"/>
<dbReference type="PaxDb" id="9606-ENSP00000228318"/>
<dbReference type="PeptideAtlas" id="Q00325"/>
<dbReference type="PRIDE" id="Q00325"/>
<dbReference type="ProteomicsDB" id="57843">
    <molecule id="Q00325-1"/>
</dbReference>
<dbReference type="ProteomicsDB" id="57844">
    <molecule id="Q00325-2"/>
</dbReference>
<dbReference type="Pumba" id="Q00325"/>
<dbReference type="TopDownProteomics" id="Q00325-1">
    <molecule id="Q00325-1"/>
</dbReference>
<dbReference type="TopDownProteomics" id="Q00325-2">
    <molecule id="Q00325-2"/>
</dbReference>
<dbReference type="Antibodypedia" id="30219">
    <property type="antibodies" value="52 antibodies from 17 providers"/>
</dbReference>
<dbReference type="DNASU" id="5250"/>
<dbReference type="Ensembl" id="ENST00000188376.9">
    <molecule id="Q00325-2"/>
    <property type="protein sequence ID" value="ENSP00000188376.5"/>
    <property type="gene ID" value="ENSG00000075415.15"/>
</dbReference>
<dbReference type="Ensembl" id="ENST00000228318.8">
    <molecule id="Q00325-1"/>
    <property type="protein sequence ID" value="ENSP00000228318.3"/>
    <property type="gene ID" value="ENSG00000075415.15"/>
</dbReference>
<dbReference type="Ensembl" id="ENST00000401722.7">
    <molecule id="Q00325-2"/>
    <property type="protein sequence ID" value="ENSP00000383898.3"/>
    <property type="gene ID" value="ENSG00000075415.15"/>
</dbReference>
<dbReference type="Ensembl" id="ENST00000549338.5">
    <molecule id="Q00325-2"/>
    <property type="protein sequence ID" value="ENSP00000447740.1"/>
    <property type="gene ID" value="ENSG00000075415.15"/>
</dbReference>
<dbReference type="Ensembl" id="ENST00000551917.5">
    <molecule id="Q00325-1"/>
    <property type="protein sequence ID" value="ENSP00000447310.1"/>
    <property type="gene ID" value="ENSG00000075415.15"/>
</dbReference>
<dbReference type="Ensembl" id="ENST00000552981.6">
    <molecule id="Q00325-2"/>
    <property type="protein sequence ID" value="ENSP00000448708.2"/>
    <property type="gene ID" value="ENSG00000075415.15"/>
</dbReference>
<dbReference type="GeneID" id="5250"/>
<dbReference type="KEGG" id="hsa:5250"/>
<dbReference type="MANE-Select" id="ENST00000552981.6">
    <molecule id="Q00325-2"/>
    <property type="protein sequence ID" value="ENSP00000448708.2"/>
    <property type="RefSeq nucleotide sequence ID" value="NM_002635.4"/>
    <property type="RefSeq protein sequence ID" value="NP_002626.1"/>
</dbReference>
<dbReference type="UCSC" id="uc001tfm.4">
    <molecule id="Q00325-1"/>
    <property type="organism name" value="human"/>
</dbReference>
<dbReference type="AGR" id="HGNC:10989"/>
<dbReference type="CTD" id="5250"/>
<dbReference type="DisGeNET" id="5250"/>
<dbReference type="GeneCards" id="SLC25A3"/>
<dbReference type="HGNC" id="HGNC:10989">
    <property type="gene designation" value="SLC25A3"/>
</dbReference>
<dbReference type="HPA" id="ENSG00000075415">
    <property type="expression patterns" value="Low tissue specificity"/>
</dbReference>
<dbReference type="MalaCards" id="SLC25A3"/>
<dbReference type="MIM" id="600370">
    <property type="type" value="gene"/>
</dbReference>
<dbReference type="MIM" id="610773">
    <property type="type" value="phenotype"/>
</dbReference>
<dbReference type="neXtProt" id="NX_Q00325"/>
<dbReference type="OpenTargets" id="ENSG00000075415"/>
<dbReference type="Orphanet" id="91130">
    <property type="disease" value="Cardiomyopathy-hypotonia-lactic acidosis syndrome"/>
</dbReference>
<dbReference type="PharmGKB" id="PA35865"/>
<dbReference type="VEuPathDB" id="HostDB:ENSG00000075415"/>
<dbReference type="eggNOG" id="KOG0767">
    <property type="taxonomic scope" value="Eukaryota"/>
</dbReference>
<dbReference type="GeneTree" id="ENSGT00390000008708"/>
<dbReference type="InParanoid" id="Q00325"/>
<dbReference type="OMA" id="YKGAIWL"/>
<dbReference type="OrthoDB" id="427452at2759"/>
<dbReference type="PAN-GO" id="Q00325">
    <property type="GO annotations" value="3 GO annotations based on evolutionary models"/>
</dbReference>
<dbReference type="PhylomeDB" id="Q00325"/>
<dbReference type="TreeFam" id="TF314119"/>
<dbReference type="PathwayCommons" id="Q00325"/>
<dbReference type="SignaLink" id="Q00325"/>
<dbReference type="BioGRID-ORCS" id="5250">
    <property type="hits" value="562 hits in 1166 CRISPR screens"/>
</dbReference>
<dbReference type="CD-CODE" id="91857CE7">
    <property type="entry name" value="Nucleolus"/>
</dbReference>
<dbReference type="CD-CODE" id="FB4E32DD">
    <property type="entry name" value="Presynaptic clusters and postsynaptic densities"/>
</dbReference>
<dbReference type="ChiTaRS" id="SLC25A3">
    <property type="organism name" value="human"/>
</dbReference>
<dbReference type="GeneWiki" id="SLC25A3"/>
<dbReference type="GenomeRNAi" id="5250"/>
<dbReference type="Pharos" id="Q00325">
    <property type="development level" value="Tbio"/>
</dbReference>
<dbReference type="PRO" id="PR:Q00325"/>
<dbReference type="Proteomes" id="UP000005640">
    <property type="component" value="Chromosome 12"/>
</dbReference>
<dbReference type="RNAct" id="Q00325">
    <property type="molecule type" value="protein"/>
</dbReference>
<dbReference type="Bgee" id="ENSG00000075415">
    <property type="expression patterns" value="Expressed in left ventricle myocardium and 206 other cell types or tissues"/>
</dbReference>
<dbReference type="ExpressionAtlas" id="Q00325">
    <property type="expression patterns" value="baseline and differential"/>
</dbReference>
<dbReference type="GO" id="GO:0070062">
    <property type="term" value="C:extracellular exosome"/>
    <property type="evidence" value="ECO:0007005"/>
    <property type="project" value="UniProtKB"/>
</dbReference>
<dbReference type="GO" id="GO:0016020">
    <property type="term" value="C:membrane"/>
    <property type="evidence" value="ECO:0007005"/>
    <property type="project" value="UniProtKB"/>
</dbReference>
<dbReference type="GO" id="GO:0005743">
    <property type="term" value="C:mitochondrial inner membrane"/>
    <property type="evidence" value="ECO:0000250"/>
    <property type="project" value="UniProtKB"/>
</dbReference>
<dbReference type="GO" id="GO:0005739">
    <property type="term" value="C:mitochondrion"/>
    <property type="evidence" value="ECO:0000314"/>
    <property type="project" value="HPA"/>
</dbReference>
<dbReference type="GO" id="GO:0005886">
    <property type="term" value="C:plasma membrane"/>
    <property type="evidence" value="ECO:0000304"/>
    <property type="project" value="ProtInc"/>
</dbReference>
<dbReference type="GO" id="GO:0005315">
    <property type="term" value="F:phosphate transmembrane transporter activity"/>
    <property type="evidence" value="ECO:0000318"/>
    <property type="project" value="GO_Central"/>
</dbReference>
<dbReference type="GO" id="GO:0015317">
    <property type="term" value="F:phosphate:proton symporter activity"/>
    <property type="evidence" value="ECO:0000250"/>
    <property type="project" value="UniProtKB"/>
</dbReference>
<dbReference type="GO" id="GO:0044877">
    <property type="term" value="F:protein-containing complex binding"/>
    <property type="evidence" value="ECO:0000314"/>
    <property type="project" value="MGI"/>
</dbReference>
<dbReference type="GO" id="GO:1990547">
    <property type="term" value="P:mitochondrial phosphate ion transmembrane transport"/>
    <property type="evidence" value="ECO:0007669"/>
    <property type="project" value="InterPro"/>
</dbReference>
<dbReference type="GO" id="GO:0035435">
    <property type="term" value="P:phosphate ion transmembrane transport"/>
    <property type="evidence" value="ECO:0000318"/>
    <property type="project" value="GO_Central"/>
</dbReference>
<dbReference type="FunFam" id="1.50.40.10:FF:000005">
    <property type="entry name" value="Mitochondrial phosphate carrier protein 2"/>
    <property type="match status" value="1"/>
</dbReference>
<dbReference type="Gene3D" id="1.50.40.10">
    <property type="entry name" value="Mitochondrial carrier domain"/>
    <property type="match status" value="1"/>
</dbReference>
<dbReference type="InterPro" id="IPR018108">
    <property type="entry name" value="Mitochondrial_sb/sol_carrier"/>
</dbReference>
<dbReference type="InterPro" id="IPR023395">
    <property type="entry name" value="Mt_carrier_dom_sf"/>
</dbReference>
<dbReference type="InterPro" id="IPR044677">
    <property type="entry name" value="SLC25A3/Pic2/Mir1-like"/>
</dbReference>
<dbReference type="PANTHER" id="PTHR45671">
    <property type="entry name" value="SOLUTE CARRIER FAMILY 25 (MITOCHONDRIAL CARRIER PHOSPHATE CARRIER), MEMBER 3, LIKE-RELATED-RELATED"/>
    <property type="match status" value="1"/>
</dbReference>
<dbReference type="PANTHER" id="PTHR45671:SF10">
    <property type="entry name" value="SOLUTE CARRIER FAMILY 25 MEMBER 3"/>
    <property type="match status" value="1"/>
</dbReference>
<dbReference type="Pfam" id="PF00153">
    <property type="entry name" value="Mito_carr"/>
    <property type="match status" value="3"/>
</dbReference>
<dbReference type="SUPFAM" id="SSF103506">
    <property type="entry name" value="Mitochondrial carrier"/>
    <property type="match status" value="1"/>
</dbReference>
<dbReference type="PROSITE" id="PS50920">
    <property type="entry name" value="SOLCAR"/>
    <property type="match status" value="3"/>
</dbReference>
<comment type="function">
    <text evidence="2 3 6 7">Inorganic ion transporter that transports phosphate or copper ions across the mitochondrial inner membrane into the matrix compartment (By similarity) (PubMed:17273968, PubMed:29237729). Mediates proton-coupled symport of phosphate ions necessary for mitochondrial oxidative phosphorylation of ADP to ATP (By similarity) (PubMed:17273968). Transports copper ions probably in the form of anionic copper(I) complexes to maintain mitochondrial matrix copper pool and to supply copper for cytochrome C oxidase complex assembly (PubMed:29237729). May also play a role in regulation of the mitochondrial permeability transition pore (mPTP) (By similarity).</text>
</comment>
<comment type="catalytic activity">
    <reaction evidence="2">
        <text>phosphate(in) + H(+)(in) = phosphate(out) + H(+)(out)</text>
        <dbReference type="Rhea" id="RHEA:29939"/>
        <dbReference type="ChEBI" id="CHEBI:15378"/>
        <dbReference type="ChEBI" id="CHEBI:43474"/>
    </reaction>
    <physiologicalReaction direction="right-to-left" evidence="2">
        <dbReference type="Rhea" id="RHEA:29941"/>
    </physiologicalReaction>
</comment>
<comment type="biophysicochemical properties">
    <molecule>Isoform A</molecule>
    <kinetics>
        <KM evidence="7">15 uM for copper</KM>
        <Vmax evidence="7">25.0 mmol/min/g enzyme toward copper</Vmax>
    </kinetics>
</comment>
<comment type="biophysicochemical properties">
    <molecule>Isoform B</molecule>
    <kinetics>
        <KM evidence="7">11 uM for copper</KM>
        <Vmax evidence="7">30.0 mmol/min/g enzyme toward copper</Vmax>
    </kinetics>
</comment>
<comment type="subunit">
    <text evidence="3">Interacts with PPIF; the interaction is impaired by CsA.</text>
</comment>
<comment type="interaction">
    <interactant intactId="EBI-5456178">
        <id>Q00325-2</id>
    </interactant>
    <interactant intactId="EBI-466029">
        <id>P42858</id>
        <label>HTT</label>
    </interactant>
    <organismsDiffer>false</organismsDiffer>
    <experiments>3</experiments>
</comment>
<comment type="interaction">
    <interactant intactId="EBI-5456178">
        <id>Q00325-2</id>
    </interactant>
    <interactant intactId="EBI-17589229">
        <id>Q6NTF9-3</id>
        <label>RHBDD2</label>
    </interactant>
    <organismsDiffer>false</organismsDiffer>
    <experiments>3</experiments>
</comment>
<comment type="subcellular location">
    <subcellularLocation>
        <location evidence="2">Mitochondrion inner membrane</location>
        <topology evidence="2">Multi-pass membrane protein</topology>
    </subcellularLocation>
</comment>
<comment type="alternative products">
    <event type="alternative splicing"/>
    <isoform>
        <id>Q00325-1</id>
        <name>A</name>
        <name evidence="10">SLC25A3-A</name>
        <sequence type="displayed"/>
    </isoform>
    <isoform>
        <id>Q00325-2</id>
        <name>B</name>
        <name evidence="10">SLC25A3-B</name>
        <sequence type="described" ref="VSP_003269"/>
    </isoform>
</comment>
<comment type="disease" evidence="6">
    <disease id="DI-01985">
        <name>Mitochondrial phosphate carrier deficiency</name>
        <acronym>MPCD</acronym>
        <description>An autosomal recessive disorder of oxidative phosphorylation. Patients have lactic acidosis, hypertrophic cardiomyopathy and muscular hypotonia and die within the first year of life.</description>
        <dbReference type="MIM" id="610773"/>
    </disease>
    <text>The disease is caused by variants affecting the gene represented in this entry.</text>
</comment>
<comment type="similarity">
    <text evidence="12">Belongs to the mitochondrial carrier (TC 2.A.29) family.</text>
</comment>